<sequence length="120" mass="12915">MFYWILLALAIATEITGTLSMKWASVGNGNAGFILMLVMITLSYIFLSFAVKKIALGVAYALWEGIGILFITIFSVLLFDEALSTMKIAGLLTLVAGIVLIKSGTRKPGKPVKEATRATI</sequence>
<dbReference type="EMBL" id="CP001113">
    <property type="protein sequence ID" value="ACF64801.1"/>
    <property type="molecule type" value="Genomic_DNA"/>
</dbReference>
<dbReference type="RefSeq" id="WP_000500278.1">
    <property type="nucleotide sequence ID" value="NZ_CCMR01000003.1"/>
</dbReference>
<dbReference type="SMR" id="B4T5B8"/>
<dbReference type="KEGG" id="see:SNSL254_A1592"/>
<dbReference type="HOGENOM" id="CLU_133067_0_0_6"/>
<dbReference type="Proteomes" id="UP000008824">
    <property type="component" value="Chromosome"/>
</dbReference>
<dbReference type="GO" id="GO:0005886">
    <property type="term" value="C:plasma membrane"/>
    <property type="evidence" value="ECO:0007669"/>
    <property type="project" value="UniProtKB-SubCell"/>
</dbReference>
<dbReference type="GO" id="GO:0015199">
    <property type="term" value="F:amino-acid betaine transmembrane transporter activity"/>
    <property type="evidence" value="ECO:0007669"/>
    <property type="project" value="TreeGrafter"/>
</dbReference>
<dbReference type="GO" id="GO:0015297">
    <property type="term" value="F:antiporter activity"/>
    <property type="evidence" value="ECO:0007669"/>
    <property type="project" value="TreeGrafter"/>
</dbReference>
<dbReference type="GO" id="GO:0015220">
    <property type="term" value="F:choline transmembrane transporter activity"/>
    <property type="evidence" value="ECO:0007669"/>
    <property type="project" value="TreeGrafter"/>
</dbReference>
<dbReference type="GO" id="GO:0015606">
    <property type="term" value="F:spermidine transmembrane transporter activity"/>
    <property type="evidence" value="ECO:0007669"/>
    <property type="project" value="UniProtKB-UniRule"/>
</dbReference>
<dbReference type="GO" id="GO:0031460">
    <property type="term" value="P:glycine betaine transport"/>
    <property type="evidence" value="ECO:0007669"/>
    <property type="project" value="TreeGrafter"/>
</dbReference>
<dbReference type="FunFam" id="1.10.3730.20:FF:000001">
    <property type="entry name" value="Quaternary ammonium compound resistance transporter SugE"/>
    <property type="match status" value="1"/>
</dbReference>
<dbReference type="Gene3D" id="1.10.3730.20">
    <property type="match status" value="1"/>
</dbReference>
<dbReference type="HAMAP" id="MF_01598">
    <property type="entry name" value="MdtJ"/>
    <property type="match status" value="1"/>
</dbReference>
<dbReference type="InterPro" id="IPR000390">
    <property type="entry name" value="Small_drug/metabolite_transptr"/>
</dbReference>
<dbReference type="InterPro" id="IPR045324">
    <property type="entry name" value="Small_multidrug_res"/>
</dbReference>
<dbReference type="InterPro" id="IPR023740">
    <property type="entry name" value="Spermidine_export_MdtJ"/>
</dbReference>
<dbReference type="NCBIfam" id="NF007767">
    <property type="entry name" value="PRK10452.1"/>
    <property type="match status" value="1"/>
</dbReference>
<dbReference type="PANTHER" id="PTHR30561">
    <property type="entry name" value="SMR FAMILY PROTON-DEPENDENT DRUG EFFLUX TRANSPORTER SUGE"/>
    <property type="match status" value="1"/>
</dbReference>
<dbReference type="PANTHER" id="PTHR30561:SF2">
    <property type="entry name" value="SPERMIDINE EXPORT PROTEIN MDTJ"/>
    <property type="match status" value="1"/>
</dbReference>
<dbReference type="Pfam" id="PF00893">
    <property type="entry name" value="Multi_Drug_Res"/>
    <property type="match status" value="1"/>
</dbReference>
<dbReference type="SUPFAM" id="SSF103481">
    <property type="entry name" value="Multidrug resistance efflux transporter EmrE"/>
    <property type="match status" value="1"/>
</dbReference>
<reference key="1">
    <citation type="journal article" date="2011" name="J. Bacteriol.">
        <title>Comparative genomics of 28 Salmonella enterica isolates: evidence for CRISPR-mediated adaptive sublineage evolution.</title>
        <authorList>
            <person name="Fricke W.F."/>
            <person name="Mammel M.K."/>
            <person name="McDermott P.F."/>
            <person name="Tartera C."/>
            <person name="White D.G."/>
            <person name="Leclerc J.E."/>
            <person name="Ravel J."/>
            <person name="Cebula T.A."/>
        </authorList>
    </citation>
    <scope>NUCLEOTIDE SEQUENCE [LARGE SCALE GENOMIC DNA]</scope>
    <source>
        <strain>SL254</strain>
    </source>
</reference>
<proteinExistence type="inferred from homology"/>
<name>MDTJ_SALNS</name>
<feature type="chain" id="PRO_1000197339" description="Spermidine export protein MdtJ">
    <location>
        <begin position="1"/>
        <end position="120"/>
    </location>
</feature>
<feature type="transmembrane region" description="Helical" evidence="1">
    <location>
        <begin position="1"/>
        <end position="21"/>
    </location>
</feature>
<feature type="transmembrane region" description="Helical" evidence="1">
    <location>
        <begin position="31"/>
        <end position="51"/>
    </location>
</feature>
<feature type="transmembrane region" description="Helical" evidence="1">
    <location>
        <begin position="54"/>
        <end position="74"/>
    </location>
</feature>
<feature type="transmembrane region" description="Helical" evidence="1">
    <location>
        <begin position="81"/>
        <end position="101"/>
    </location>
</feature>
<evidence type="ECO:0000255" key="1">
    <source>
        <dbReference type="HAMAP-Rule" id="MF_01598"/>
    </source>
</evidence>
<organism>
    <name type="scientific">Salmonella newport (strain SL254)</name>
    <dbReference type="NCBI Taxonomy" id="423368"/>
    <lineage>
        <taxon>Bacteria</taxon>
        <taxon>Pseudomonadati</taxon>
        <taxon>Pseudomonadota</taxon>
        <taxon>Gammaproteobacteria</taxon>
        <taxon>Enterobacterales</taxon>
        <taxon>Enterobacteriaceae</taxon>
        <taxon>Salmonella</taxon>
    </lineage>
</organism>
<protein>
    <recommendedName>
        <fullName evidence="1">Spermidine export protein MdtJ</fullName>
    </recommendedName>
</protein>
<gene>
    <name evidence="1" type="primary">mdtJ</name>
    <name type="ordered locus">SNSL254_A1592</name>
</gene>
<keyword id="KW-0997">Cell inner membrane</keyword>
<keyword id="KW-1003">Cell membrane</keyword>
<keyword id="KW-0472">Membrane</keyword>
<keyword id="KW-0812">Transmembrane</keyword>
<keyword id="KW-1133">Transmembrane helix</keyword>
<keyword id="KW-0813">Transport</keyword>
<comment type="function">
    <text evidence="1">Catalyzes the excretion of spermidine.</text>
</comment>
<comment type="subunit">
    <text evidence="1">Forms a complex with MdtI.</text>
</comment>
<comment type="subcellular location">
    <subcellularLocation>
        <location evidence="1">Cell inner membrane</location>
        <topology evidence="1">Multi-pass membrane protein</topology>
    </subcellularLocation>
</comment>
<comment type="similarity">
    <text evidence="1">Belongs to the drug/metabolite transporter (DMT) superfamily. Small multidrug resistance (SMR) (TC 2.A.7.1) family. MdtJ subfamily.</text>
</comment>
<accession>B4T5B8</accession>